<proteinExistence type="inferred from homology"/>
<comment type="function">
    <text evidence="1">Promotes RNA polymerase assembly. Latches the N- and C-terminal regions of the beta' subunit thereby facilitating its interaction with the beta and alpha subunits.</text>
</comment>
<comment type="catalytic activity">
    <reaction evidence="1">
        <text>RNA(n) + a ribonucleoside 5'-triphosphate = RNA(n+1) + diphosphate</text>
        <dbReference type="Rhea" id="RHEA:21248"/>
        <dbReference type="Rhea" id="RHEA-COMP:14527"/>
        <dbReference type="Rhea" id="RHEA-COMP:17342"/>
        <dbReference type="ChEBI" id="CHEBI:33019"/>
        <dbReference type="ChEBI" id="CHEBI:61557"/>
        <dbReference type="ChEBI" id="CHEBI:140395"/>
        <dbReference type="EC" id="2.7.7.6"/>
    </reaction>
</comment>
<comment type="subunit">
    <text evidence="1">The RNAP catalytic core consists of 2 alpha, 1 beta, 1 beta' and 1 omega subunit. When a sigma factor is associated with the core the holoenzyme is formed, which can initiate transcription.</text>
</comment>
<comment type="similarity">
    <text evidence="1">Belongs to the RNA polymerase subunit omega family.</text>
</comment>
<evidence type="ECO:0000255" key="1">
    <source>
        <dbReference type="HAMAP-Rule" id="MF_00366"/>
    </source>
</evidence>
<name>RPOZ_SHIF8</name>
<dbReference type="EC" id="2.7.7.6" evidence="1"/>
<dbReference type="EMBL" id="CP000266">
    <property type="protein sequence ID" value="ABF05888.1"/>
    <property type="molecule type" value="Genomic_DNA"/>
</dbReference>
<dbReference type="RefSeq" id="WP_000135058.1">
    <property type="nucleotide sequence ID" value="NC_008258.1"/>
</dbReference>
<dbReference type="SMR" id="Q0SYH7"/>
<dbReference type="GeneID" id="98390719"/>
<dbReference type="KEGG" id="sfv:SFV_3880"/>
<dbReference type="HOGENOM" id="CLU_125406_5_3_6"/>
<dbReference type="Proteomes" id="UP000000659">
    <property type="component" value="Chromosome"/>
</dbReference>
<dbReference type="GO" id="GO:0000428">
    <property type="term" value="C:DNA-directed RNA polymerase complex"/>
    <property type="evidence" value="ECO:0007669"/>
    <property type="project" value="UniProtKB-KW"/>
</dbReference>
<dbReference type="GO" id="GO:0003677">
    <property type="term" value="F:DNA binding"/>
    <property type="evidence" value="ECO:0007669"/>
    <property type="project" value="UniProtKB-UniRule"/>
</dbReference>
<dbReference type="GO" id="GO:0003899">
    <property type="term" value="F:DNA-directed RNA polymerase activity"/>
    <property type="evidence" value="ECO:0007669"/>
    <property type="project" value="UniProtKB-UniRule"/>
</dbReference>
<dbReference type="GO" id="GO:0006351">
    <property type="term" value="P:DNA-templated transcription"/>
    <property type="evidence" value="ECO:0007669"/>
    <property type="project" value="UniProtKB-UniRule"/>
</dbReference>
<dbReference type="FunFam" id="3.90.940.10:FF:000001">
    <property type="entry name" value="DNA-directed RNA polymerase subunit omega"/>
    <property type="match status" value="1"/>
</dbReference>
<dbReference type="Gene3D" id="3.90.940.10">
    <property type="match status" value="1"/>
</dbReference>
<dbReference type="HAMAP" id="MF_00366">
    <property type="entry name" value="RNApol_bact_RpoZ"/>
    <property type="match status" value="1"/>
</dbReference>
<dbReference type="InterPro" id="IPR003716">
    <property type="entry name" value="DNA-dir_RNA_pol_omega"/>
</dbReference>
<dbReference type="InterPro" id="IPR006110">
    <property type="entry name" value="Pol_omega/Rpo6/RPB6"/>
</dbReference>
<dbReference type="InterPro" id="IPR036161">
    <property type="entry name" value="RPB6/omega-like_sf"/>
</dbReference>
<dbReference type="NCBIfam" id="TIGR00690">
    <property type="entry name" value="rpoZ"/>
    <property type="match status" value="1"/>
</dbReference>
<dbReference type="PANTHER" id="PTHR34476">
    <property type="entry name" value="DNA-DIRECTED RNA POLYMERASE SUBUNIT OMEGA"/>
    <property type="match status" value="1"/>
</dbReference>
<dbReference type="PANTHER" id="PTHR34476:SF1">
    <property type="entry name" value="DNA-DIRECTED RNA POLYMERASE SUBUNIT OMEGA"/>
    <property type="match status" value="1"/>
</dbReference>
<dbReference type="Pfam" id="PF01192">
    <property type="entry name" value="RNA_pol_Rpb6"/>
    <property type="match status" value="1"/>
</dbReference>
<dbReference type="SMART" id="SM01409">
    <property type="entry name" value="RNA_pol_Rpb6"/>
    <property type="match status" value="1"/>
</dbReference>
<dbReference type="SUPFAM" id="SSF63562">
    <property type="entry name" value="RPB6/omega subunit-like"/>
    <property type="match status" value="1"/>
</dbReference>
<protein>
    <recommendedName>
        <fullName evidence="1">DNA-directed RNA polymerase subunit omega</fullName>
        <shortName evidence="1">RNAP omega subunit</shortName>
        <ecNumber evidence="1">2.7.7.6</ecNumber>
    </recommendedName>
    <alternativeName>
        <fullName evidence="1">RNA polymerase omega subunit</fullName>
    </alternativeName>
    <alternativeName>
        <fullName evidence="1">Transcriptase subunit omega</fullName>
    </alternativeName>
</protein>
<feature type="chain" id="PRO_1000006017" description="DNA-directed RNA polymerase subunit omega">
    <location>
        <begin position="1"/>
        <end position="91"/>
    </location>
</feature>
<sequence length="91" mass="10237">MARVTVQDAVEKIGNRFDLVLVAARRARQMQVGGKDPLVPEENDKTTVIALREIEEGLINNQILDVRERQEQQEQEAAELQAVTAIAEGRR</sequence>
<reference key="1">
    <citation type="journal article" date="2006" name="BMC Genomics">
        <title>Complete genome sequence of Shigella flexneri 5b and comparison with Shigella flexneri 2a.</title>
        <authorList>
            <person name="Nie H."/>
            <person name="Yang F."/>
            <person name="Zhang X."/>
            <person name="Yang J."/>
            <person name="Chen L."/>
            <person name="Wang J."/>
            <person name="Xiong Z."/>
            <person name="Peng J."/>
            <person name="Sun L."/>
            <person name="Dong J."/>
            <person name="Xue Y."/>
            <person name="Xu X."/>
            <person name="Chen S."/>
            <person name="Yao Z."/>
            <person name="Shen Y."/>
            <person name="Jin Q."/>
        </authorList>
    </citation>
    <scope>NUCLEOTIDE SEQUENCE [LARGE SCALE GENOMIC DNA]</scope>
    <source>
        <strain>8401</strain>
    </source>
</reference>
<accession>Q0SYH7</accession>
<organism>
    <name type="scientific">Shigella flexneri serotype 5b (strain 8401)</name>
    <dbReference type="NCBI Taxonomy" id="373384"/>
    <lineage>
        <taxon>Bacteria</taxon>
        <taxon>Pseudomonadati</taxon>
        <taxon>Pseudomonadota</taxon>
        <taxon>Gammaproteobacteria</taxon>
        <taxon>Enterobacterales</taxon>
        <taxon>Enterobacteriaceae</taxon>
        <taxon>Shigella</taxon>
    </lineage>
</organism>
<gene>
    <name evidence="1" type="primary">rpoZ</name>
    <name type="ordered locus">SFV_3880</name>
</gene>
<keyword id="KW-0240">DNA-directed RNA polymerase</keyword>
<keyword id="KW-0548">Nucleotidyltransferase</keyword>
<keyword id="KW-0804">Transcription</keyword>
<keyword id="KW-0808">Transferase</keyword>